<reference key="1">
    <citation type="journal article" date="2000" name="Nature">
        <title>Sequence and analysis of chromosome 1 of the plant Arabidopsis thaliana.</title>
        <authorList>
            <person name="Theologis A."/>
            <person name="Ecker J.R."/>
            <person name="Palm C.J."/>
            <person name="Federspiel N.A."/>
            <person name="Kaul S."/>
            <person name="White O."/>
            <person name="Alonso J."/>
            <person name="Altafi H."/>
            <person name="Araujo R."/>
            <person name="Bowman C.L."/>
            <person name="Brooks S.Y."/>
            <person name="Buehler E."/>
            <person name="Chan A."/>
            <person name="Chao Q."/>
            <person name="Chen H."/>
            <person name="Cheuk R.F."/>
            <person name="Chin C.W."/>
            <person name="Chung M.K."/>
            <person name="Conn L."/>
            <person name="Conway A.B."/>
            <person name="Conway A.R."/>
            <person name="Creasy T.H."/>
            <person name="Dewar K."/>
            <person name="Dunn P."/>
            <person name="Etgu P."/>
            <person name="Feldblyum T.V."/>
            <person name="Feng J.-D."/>
            <person name="Fong B."/>
            <person name="Fujii C.Y."/>
            <person name="Gill J.E."/>
            <person name="Goldsmith A.D."/>
            <person name="Haas B."/>
            <person name="Hansen N.F."/>
            <person name="Hughes B."/>
            <person name="Huizar L."/>
            <person name="Hunter J.L."/>
            <person name="Jenkins J."/>
            <person name="Johnson-Hopson C."/>
            <person name="Khan S."/>
            <person name="Khaykin E."/>
            <person name="Kim C.J."/>
            <person name="Koo H.L."/>
            <person name="Kremenetskaia I."/>
            <person name="Kurtz D.B."/>
            <person name="Kwan A."/>
            <person name="Lam B."/>
            <person name="Langin-Hooper S."/>
            <person name="Lee A."/>
            <person name="Lee J.M."/>
            <person name="Lenz C.A."/>
            <person name="Li J.H."/>
            <person name="Li Y.-P."/>
            <person name="Lin X."/>
            <person name="Liu S.X."/>
            <person name="Liu Z.A."/>
            <person name="Luros J.S."/>
            <person name="Maiti R."/>
            <person name="Marziali A."/>
            <person name="Militscher J."/>
            <person name="Miranda M."/>
            <person name="Nguyen M."/>
            <person name="Nierman W.C."/>
            <person name="Osborne B.I."/>
            <person name="Pai G."/>
            <person name="Peterson J."/>
            <person name="Pham P.K."/>
            <person name="Rizzo M."/>
            <person name="Rooney T."/>
            <person name="Rowley D."/>
            <person name="Sakano H."/>
            <person name="Salzberg S.L."/>
            <person name="Schwartz J.R."/>
            <person name="Shinn P."/>
            <person name="Southwick A.M."/>
            <person name="Sun H."/>
            <person name="Tallon L.J."/>
            <person name="Tambunga G."/>
            <person name="Toriumi M.J."/>
            <person name="Town C.D."/>
            <person name="Utterback T."/>
            <person name="Van Aken S."/>
            <person name="Vaysberg M."/>
            <person name="Vysotskaia V.S."/>
            <person name="Walker M."/>
            <person name="Wu D."/>
            <person name="Yu G."/>
            <person name="Fraser C.M."/>
            <person name="Venter J.C."/>
            <person name="Davis R.W."/>
        </authorList>
    </citation>
    <scope>NUCLEOTIDE SEQUENCE [LARGE SCALE GENOMIC DNA]</scope>
    <source>
        <strain>cv. Columbia</strain>
    </source>
</reference>
<reference key="2">
    <citation type="journal article" date="2017" name="Plant J.">
        <title>Araport11: a complete reannotation of the Arabidopsis thaliana reference genome.</title>
        <authorList>
            <person name="Cheng C.Y."/>
            <person name="Krishnakumar V."/>
            <person name="Chan A.P."/>
            <person name="Thibaud-Nissen F."/>
            <person name="Schobel S."/>
            <person name="Town C.D."/>
        </authorList>
    </citation>
    <scope>GENOME REANNOTATION</scope>
    <source>
        <strain>cv. Columbia</strain>
    </source>
</reference>
<reference key="3">
    <citation type="submission" date="2003-11" db="EMBL/GenBank/DDBJ databases">
        <title>Arabidopsis cDNA clones.</title>
        <authorList>
            <person name="Cheuk R.F."/>
            <person name="Chen H."/>
            <person name="Kim C.J."/>
            <person name="Shinn P."/>
            <person name="Ecker J.R."/>
        </authorList>
    </citation>
    <scope>NUCLEOTIDE SEQUENCE [LARGE SCALE MRNA]</scope>
    <source>
        <strain>cv. Columbia</strain>
    </source>
</reference>
<reference key="4">
    <citation type="journal article" date="2013" name="J. Exp. Bot.">
        <title>The CEP family in land plants: evolutionary analyses, expression studies, and role in Arabidopsis shoot development.</title>
        <authorList>
            <person name="Roberts I."/>
            <person name="Smith S."/>
            <person name="De Rybel B."/>
            <person name="Van Den Broeke J."/>
            <person name="Smet W."/>
            <person name="De Cokere S."/>
            <person name="Mispelaere M."/>
            <person name="De Smet I."/>
            <person name="Beeckman T."/>
        </authorList>
    </citation>
    <scope>INDUCTION BY GIBBERELLIC ACID AND NITROGEN</scope>
    <scope>GENE FAMILY</scope>
    <source>
        <strain>cv. Columbia</strain>
    </source>
</reference>
<reference key="5">
    <citation type="journal article" date="2013" name="J. Exp. Bot.">
        <title>CEP genes regulate root and shoot development in response to environmental cues and are specific to seed plants.</title>
        <authorList>
            <person name="Delay C."/>
            <person name="Imin N."/>
            <person name="Djordjevic M.A."/>
        </authorList>
    </citation>
    <scope>INDUCTION BY OSMOTIC STRESS; AMMONIUM CHLORIDE STARVATION; NITROGEN DEPLETION AND NITRATE DEPLETION</scope>
    <scope>GENE FAMILY</scope>
    <scope>NOMENCLATURE</scope>
    <source>
        <strain>cv. Columbia</strain>
    </source>
</reference>
<gene>
    <name evidence="8" type="primary">CEP13</name>
    <name evidence="10" type="ordered locus">At1g16950</name>
    <name evidence="12" type="ORF">F17F16.23</name>
    <name evidence="11" type="ORF">F5I1.4</name>
</gene>
<evidence type="ECO:0000250" key="1">
    <source>
        <dbReference type="UniProtKB" id="O80460"/>
    </source>
</evidence>
<evidence type="ECO:0000250" key="2">
    <source>
        <dbReference type="UniProtKB" id="Q058G9"/>
    </source>
</evidence>
<evidence type="ECO:0000250" key="3">
    <source>
        <dbReference type="UniProtKB" id="Q8L8Y3"/>
    </source>
</evidence>
<evidence type="ECO:0000255" key="4"/>
<evidence type="ECO:0000256" key="5">
    <source>
        <dbReference type="SAM" id="MobiDB-lite"/>
    </source>
</evidence>
<evidence type="ECO:0000269" key="6">
    <source>
    </source>
</evidence>
<evidence type="ECO:0000269" key="7">
    <source>
    </source>
</evidence>
<evidence type="ECO:0000303" key="8">
    <source>
    </source>
</evidence>
<evidence type="ECO:0000305" key="9"/>
<evidence type="ECO:0000312" key="10">
    <source>
        <dbReference type="Araport" id="AT1G16950"/>
    </source>
</evidence>
<evidence type="ECO:0000312" key="11">
    <source>
        <dbReference type="EMBL" id="AAF99837.1"/>
    </source>
</evidence>
<evidence type="ECO:0000312" key="12">
    <source>
        <dbReference type="EMBL" id="AEE29525.1"/>
    </source>
</evidence>
<feature type="signal peptide" evidence="4">
    <location>
        <begin position="1"/>
        <end position="27"/>
    </location>
</feature>
<feature type="propeptide" id="PRO_0000440010" evidence="9">
    <location>
        <begin position="28"/>
        <end position="78"/>
    </location>
</feature>
<feature type="peptide" id="PRO_0000440011" description="C-terminally encoded peptide 13" evidence="2">
    <location>
        <begin position="79"/>
        <end position="93"/>
    </location>
</feature>
<feature type="region of interest" description="Disordered" evidence="5">
    <location>
        <begin position="45"/>
        <end position="93"/>
    </location>
</feature>
<feature type="modified residue" description="Hydroxyproline" evidence="2">
    <location>
        <position position="87"/>
    </location>
</feature>
<feature type="modified residue" description="Hydroxyproline" evidence="3">
    <location>
        <position position="89"/>
    </location>
</feature>
<proteinExistence type="evidence at transcript level"/>
<sequence>MARPRISISMICLLILIVGFVLQSSQARKVLVPYGTSKGLFLSALPKGNVPPSGPSDKGHTSPPDDTDQRMVPENSPEIYRRLESVPSPGVGH</sequence>
<organism>
    <name type="scientific">Arabidopsis thaliana</name>
    <name type="common">Mouse-ear cress</name>
    <dbReference type="NCBI Taxonomy" id="3702"/>
    <lineage>
        <taxon>Eukaryota</taxon>
        <taxon>Viridiplantae</taxon>
        <taxon>Streptophyta</taxon>
        <taxon>Embryophyta</taxon>
        <taxon>Tracheophyta</taxon>
        <taxon>Spermatophyta</taxon>
        <taxon>Magnoliopsida</taxon>
        <taxon>eudicotyledons</taxon>
        <taxon>Gunneridae</taxon>
        <taxon>Pentapetalae</taxon>
        <taxon>rosids</taxon>
        <taxon>malvids</taxon>
        <taxon>Brassicales</taxon>
        <taxon>Brassicaceae</taxon>
        <taxon>Camelineae</taxon>
        <taxon>Arabidopsis</taxon>
    </lineage>
</organism>
<comment type="function">
    <text evidence="3">Extracellular signaling peptide that may regulate primary root growth rate and systemic nitrogen (N)-demand signaling.</text>
</comment>
<comment type="subunit">
    <text evidence="3">Interacts with CEP receptors (e.g. CEPR1 and CEPR2).</text>
</comment>
<comment type="subcellular location">
    <molecule>C-terminally encoded peptide 13</molecule>
    <subcellularLocation>
        <location evidence="1">Secreted</location>
        <location evidence="1">Extracellular space</location>
        <location evidence="1">Apoplast</location>
    </subcellularLocation>
    <text evidence="1">Accumulates in xylem sap.</text>
</comment>
<comment type="induction">
    <text evidence="6 7">Induced by gibberellic acid (GA) but repressed by nitrogen (N) (PubMed:24179095). Accumulates in roots in response to nitrate and ammonium chloride NH(4)Cl depletion and to osmotic stress (e.g. mannitol). Repressed in shoots by nitrogen starvation (PubMed:24179096).</text>
</comment>
<comment type="PTM">
    <text evidence="3">The mature small signaling peptide is generated by proteolytic processing of the longer precursor.</text>
</comment>
<comment type="similarity">
    <text evidence="9">Belongs to the C-terminally encoded plant signaling peptide (CEP) family.</text>
</comment>
<keyword id="KW-0052">Apoplast</keyword>
<keyword id="KW-0217">Developmental protein</keyword>
<keyword id="KW-0372">Hormone</keyword>
<keyword id="KW-0379">Hydroxylation</keyword>
<keyword id="KW-1185">Reference proteome</keyword>
<keyword id="KW-0964">Secreted</keyword>
<keyword id="KW-0732">Signal</keyword>
<name>PCP13_ARATH</name>
<accession>Q9FZ54</accession>
<dbReference type="EMBL" id="AC051629">
    <property type="protein sequence ID" value="AAF99837.1"/>
    <property type="molecule type" value="Genomic_DNA"/>
</dbReference>
<dbReference type="EMBL" id="CP002684">
    <property type="protein sequence ID" value="AEE29525.1"/>
    <property type="molecule type" value="Genomic_DNA"/>
</dbReference>
<dbReference type="EMBL" id="BT010799">
    <property type="protein sequence ID" value="AAR24166.1"/>
    <property type="molecule type" value="mRNA"/>
</dbReference>
<dbReference type="EMBL" id="BT011278">
    <property type="protein sequence ID" value="AAR92314.1"/>
    <property type="molecule type" value="mRNA"/>
</dbReference>
<dbReference type="PIR" id="B86305">
    <property type="entry name" value="B86305"/>
</dbReference>
<dbReference type="RefSeq" id="NP_173139.1">
    <property type="nucleotide sequence ID" value="NM_101556.4"/>
</dbReference>
<dbReference type="SMR" id="Q9FZ54"/>
<dbReference type="IntAct" id="Q9FZ54">
    <property type="interactions" value="4"/>
</dbReference>
<dbReference type="STRING" id="3702.Q9FZ54"/>
<dbReference type="PaxDb" id="3702-AT1G16950.1"/>
<dbReference type="EnsemblPlants" id="AT1G16950.1">
    <property type="protein sequence ID" value="AT1G16950.1"/>
    <property type="gene ID" value="AT1G16950"/>
</dbReference>
<dbReference type="GeneID" id="838266"/>
<dbReference type="Gramene" id="AT1G16950.1">
    <property type="protein sequence ID" value="AT1G16950.1"/>
    <property type="gene ID" value="AT1G16950"/>
</dbReference>
<dbReference type="KEGG" id="ath:AT1G16950"/>
<dbReference type="Araport" id="AT1G16950"/>
<dbReference type="TAIR" id="AT1G16950"/>
<dbReference type="HOGENOM" id="CLU_176522_0_0_1"/>
<dbReference type="InParanoid" id="Q9FZ54"/>
<dbReference type="OMA" id="QSCQARK"/>
<dbReference type="OrthoDB" id="1915362at2759"/>
<dbReference type="PhylomeDB" id="Q9FZ54"/>
<dbReference type="PRO" id="PR:Q9FZ54"/>
<dbReference type="Proteomes" id="UP000006548">
    <property type="component" value="Chromosome 1"/>
</dbReference>
<dbReference type="ExpressionAtlas" id="Q9FZ54">
    <property type="expression patterns" value="baseline and differential"/>
</dbReference>
<dbReference type="GO" id="GO:0048046">
    <property type="term" value="C:apoplast"/>
    <property type="evidence" value="ECO:0000250"/>
    <property type="project" value="UniProtKB"/>
</dbReference>
<dbReference type="GO" id="GO:0005179">
    <property type="term" value="F:hormone activity"/>
    <property type="evidence" value="ECO:0000250"/>
    <property type="project" value="UniProtKB"/>
</dbReference>
<dbReference type="GO" id="GO:0006995">
    <property type="term" value="P:cellular response to nitrogen starvation"/>
    <property type="evidence" value="ECO:0000270"/>
    <property type="project" value="UniProtKB"/>
</dbReference>
<dbReference type="GO" id="GO:1902025">
    <property type="term" value="P:nitrate import"/>
    <property type="evidence" value="ECO:0000250"/>
    <property type="project" value="UniProtKB"/>
</dbReference>
<dbReference type="GO" id="GO:2000280">
    <property type="term" value="P:regulation of root development"/>
    <property type="evidence" value="ECO:0000250"/>
    <property type="project" value="UniProtKB"/>
</dbReference>
<dbReference type="GO" id="GO:0060359">
    <property type="term" value="P:response to ammonium ion"/>
    <property type="evidence" value="ECO:0000270"/>
    <property type="project" value="UniProtKB"/>
</dbReference>
<dbReference type="GO" id="GO:0009739">
    <property type="term" value="P:response to gibberellin"/>
    <property type="evidence" value="ECO:0000270"/>
    <property type="project" value="UniProtKB"/>
</dbReference>
<dbReference type="GO" id="GO:0090548">
    <property type="term" value="P:response to nitrate starvation"/>
    <property type="evidence" value="ECO:0000270"/>
    <property type="project" value="UniProtKB"/>
</dbReference>
<dbReference type="GO" id="GO:1901698">
    <property type="term" value="P:response to nitrogen compound"/>
    <property type="evidence" value="ECO:0000270"/>
    <property type="project" value="UniProtKB"/>
</dbReference>
<dbReference type="GO" id="GO:0006970">
    <property type="term" value="P:response to osmotic stress"/>
    <property type="evidence" value="ECO:0000270"/>
    <property type="project" value="UniProtKB"/>
</dbReference>
<dbReference type="InterPro" id="IPR038930">
    <property type="entry name" value="CEP13/CEP14"/>
</dbReference>
<dbReference type="PANTHER" id="PTHR37180:SF8">
    <property type="entry name" value="PRECURSOR OF CEP13"/>
    <property type="match status" value="1"/>
</dbReference>
<dbReference type="PANTHER" id="PTHR37180">
    <property type="entry name" value="PRECURSOR OF CEP14"/>
    <property type="match status" value="1"/>
</dbReference>
<protein>
    <recommendedName>
        <fullName evidence="8">Precursor of CEP13</fullName>
        <shortName evidence="8">PCEP13</shortName>
    </recommendedName>
    <component>
        <recommendedName>
            <fullName evidence="8">C-terminally encoded peptide 13</fullName>
            <shortName evidence="8">CEP13</shortName>
        </recommendedName>
    </component>
</protein>